<sequence>MNKLALYCRPGFEKEVAAEIADQASHLGVFGFARVQDNSGYVIFECYQPDEADRLARDIPFNRLIFARQMMVISGLLEDLDPADRISPIVTAFEELSQQVNFAQSSELFVETADTNEAKELSTFCRKFTVPLRQALKKQGWLSAKATQKSGQFLHCFFVKPNCCYVGYSYVDNHSPHFMGIPRLKFPADAPSRSTLKLEEAILTFIPRKEENKRLNENMIGVDLGACPGGWTYQLVKRGLFVYAVDHGKMAASLHDTGRIEHCAEDGFKFQPPKRKKVDWLVCDMVEQPSRISLLIGKWLLNGWCRETIFNLKLPMKKRYQEVILCLENLAVMLAEQNLNFEIQAKHLYHDREEITVHIALKP</sequence>
<dbReference type="EC" id="2.1.1.186" evidence="1"/>
<dbReference type="EMBL" id="CP000671">
    <property type="protein sequence ID" value="ABQ98566.1"/>
    <property type="molecule type" value="Genomic_DNA"/>
</dbReference>
<dbReference type="SMR" id="A5UCR5"/>
<dbReference type="KEGG" id="hip:CGSHiEE_06065"/>
<dbReference type="HOGENOM" id="CLU_043780_0_0_6"/>
<dbReference type="GO" id="GO:0005737">
    <property type="term" value="C:cytoplasm"/>
    <property type="evidence" value="ECO:0007669"/>
    <property type="project" value="UniProtKB-SubCell"/>
</dbReference>
<dbReference type="GO" id="GO:0008757">
    <property type="term" value="F:S-adenosylmethionine-dependent methyltransferase activity"/>
    <property type="evidence" value="ECO:0007669"/>
    <property type="project" value="UniProtKB-UniRule"/>
</dbReference>
<dbReference type="GO" id="GO:0032259">
    <property type="term" value="P:methylation"/>
    <property type="evidence" value="ECO:0007669"/>
    <property type="project" value="UniProtKB-KW"/>
</dbReference>
<dbReference type="GO" id="GO:0006364">
    <property type="term" value="P:rRNA processing"/>
    <property type="evidence" value="ECO:0007669"/>
    <property type="project" value="UniProtKB-UniRule"/>
</dbReference>
<dbReference type="Gene3D" id="3.30.2300.20">
    <property type="match status" value="1"/>
</dbReference>
<dbReference type="Gene3D" id="3.30.70.2810">
    <property type="match status" value="1"/>
</dbReference>
<dbReference type="Gene3D" id="3.40.50.150">
    <property type="entry name" value="Vaccinia Virus protein VP39"/>
    <property type="match status" value="1"/>
</dbReference>
<dbReference type="HAMAP" id="MF_01551">
    <property type="entry name" value="23SrRNA_methyltr_M"/>
    <property type="match status" value="1"/>
</dbReference>
<dbReference type="InterPro" id="IPR040739">
    <property type="entry name" value="RlmM_FDX"/>
</dbReference>
<dbReference type="InterPro" id="IPR048646">
    <property type="entry name" value="RlmM_THUMP-like"/>
</dbReference>
<dbReference type="InterPro" id="IPR002877">
    <property type="entry name" value="RNA_MeTrfase_FtsJ_dom"/>
</dbReference>
<dbReference type="InterPro" id="IPR011224">
    <property type="entry name" value="rRNA_MeTrfase_M"/>
</dbReference>
<dbReference type="InterPro" id="IPR029063">
    <property type="entry name" value="SAM-dependent_MTases_sf"/>
</dbReference>
<dbReference type="NCBIfam" id="NF008734">
    <property type="entry name" value="PRK11760.1"/>
    <property type="match status" value="1"/>
</dbReference>
<dbReference type="PANTHER" id="PTHR37524">
    <property type="entry name" value="RIBOSOMAL RNA LARGE SUBUNIT METHYLTRANSFERASE M"/>
    <property type="match status" value="1"/>
</dbReference>
<dbReference type="PANTHER" id="PTHR37524:SF2">
    <property type="entry name" value="RIBOSOMAL RNA METHYLTRANSFERASE FTSJ DOMAIN-CONTAINING PROTEIN"/>
    <property type="match status" value="1"/>
</dbReference>
<dbReference type="Pfam" id="PF01728">
    <property type="entry name" value="FtsJ"/>
    <property type="match status" value="1"/>
</dbReference>
<dbReference type="Pfam" id="PF18125">
    <property type="entry name" value="RlmM_FDX"/>
    <property type="match status" value="1"/>
</dbReference>
<dbReference type="Pfam" id="PF21239">
    <property type="entry name" value="RLMM_N"/>
    <property type="match status" value="1"/>
</dbReference>
<dbReference type="PIRSF" id="PIRSF028774">
    <property type="entry name" value="UCP028774"/>
    <property type="match status" value="1"/>
</dbReference>
<dbReference type="SUPFAM" id="SSF53335">
    <property type="entry name" value="S-adenosyl-L-methionine-dependent methyltransferases"/>
    <property type="match status" value="1"/>
</dbReference>
<gene>
    <name evidence="1" type="primary">rlmM</name>
    <name type="ordered locus">CGSHiEE_06065</name>
</gene>
<comment type="function">
    <text evidence="1">Catalyzes the 2'-O-methylation at nucleotide C2498 in 23S rRNA.</text>
</comment>
<comment type="catalytic activity">
    <reaction evidence="1">
        <text>cytidine(2498) in 23S rRNA + S-adenosyl-L-methionine = 2'-O-methylcytidine(2498) in 23S rRNA + S-adenosyl-L-homocysteine + H(+)</text>
        <dbReference type="Rhea" id="RHEA:42788"/>
        <dbReference type="Rhea" id="RHEA-COMP:10244"/>
        <dbReference type="Rhea" id="RHEA-COMP:10245"/>
        <dbReference type="ChEBI" id="CHEBI:15378"/>
        <dbReference type="ChEBI" id="CHEBI:57856"/>
        <dbReference type="ChEBI" id="CHEBI:59789"/>
        <dbReference type="ChEBI" id="CHEBI:74495"/>
        <dbReference type="ChEBI" id="CHEBI:82748"/>
        <dbReference type="EC" id="2.1.1.186"/>
    </reaction>
</comment>
<comment type="subunit">
    <text evidence="1">Monomer.</text>
</comment>
<comment type="subcellular location">
    <subcellularLocation>
        <location evidence="1">Cytoplasm</location>
    </subcellularLocation>
</comment>
<comment type="similarity">
    <text evidence="1">Belongs to the class I-like SAM-binding methyltransferase superfamily. RNA methyltransferase RlmE family. RlmM subfamily.</text>
</comment>
<organism>
    <name type="scientific">Haemophilus influenzae (strain PittEE)</name>
    <dbReference type="NCBI Taxonomy" id="374930"/>
    <lineage>
        <taxon>Bacteria</taxon>
        <taxon>Pseudomonadati</taxon>
        <taxon>Pseudomonadota</taxon>
        <taxon>Gammaproteobacteria</taxon>
        <taxon>Pasteurellales</taxon>
        <taxon>Pasteurellaceae</taxon>
        <taxon>Haemophilus</taxon>
    </lineage>
</organism>
<evidence type="ECO:0000255" key="1">
    <source>
        <dbReference type="HAMAP-Rule" id="MF_01551"/>
    </source>
</evidence>
<protein>
    <recommendedName>
        <fullName evidence="1">Ribosomal RNA large subunit methyltransferase M</fullName>
        <ecNumber evidence="1">2.1.1.186</ecNumber>
    </recommendedName>
    <alternativeName>
        <fullName evidence="1">23S rRNA (cytidine2498-2'-O)-methyltransferase</fullName>
    </alternativeName>
    <alternativeName>
        <fullName evidence="1">23S rRNA 2'-O-ribose methyltransferase RlmM</fullName>
    </alternativeName>
</protein>
<feature type="chain" id="PRO_0000314516" description="Ribosomal RNA large subunit methyltransferase M">
    <location>
        <begin position="1"/>
        <end position="363"/>
    </location>
</feature>
<feature type="active site" description="Proton acceptor" evidence="1">
    <location>
        <position position="313"/>
    </location>
</feature>
<feature type="binding site" evidence="1">
    <location>
        <position position="194"/>
    </location>
    <ligand>
        <name>S-adenosyl-L-methionine</name>
        <dbReference type="ChEBI" id="CHEBI:59789"/>
    </ligand>
</feature>
<feature type="binding site" evidence="1">
    <location>
        <begin position="227"/>
        <end position="230"/>
    </location>
    <ligand>
        <name>S-adenosyl-L-methionine</name>
        <dbReference type="ChEBI" id="CHEBI:59789"/>
    </ligand>
</feature>
<feature type="binding site" evidence="1">
    <location>
        <position position="246"/>
    </location>
    <ligand>
        <name>S-adenosyl-L-methionine</name>
        <dbReference type="ChEBI" id="CHEBI:59789"/>
    </ligand>
</feature>
<feature type="binding site" evidence="1">
    <location>
        <position position="266"/>
    </location>
    <ligand>
        <name>S-adenosyl-L-methionine</name>
        <dbReference type="ChEBI" id="CHEBI:59789"/>
    </ligand>
</feature>
<feature type="binding site" evidence="1">
    <location>
        <position position="284"/>
    </location>
    <ligand>
        <name>S-adenosyl-L-methionine</name>
        <dbReference type="ChEBI" id="CHEBI:59789"/>
    </ligand>
</feature>
<reference key="1">
    <citation type="journal article" date="2007" name="Genome Biol.">
        <title>Characterization and modeling of the Haemophilus influenzae core and supragenomes based on the complete genomic sequences of Rd and 12 clinical nontypeable strains.</title>
        <authorList>
            <person name="Hogg J.S."/>
            <person name="Hu F.Z."/>
            <person name="Janto B."/>
            <person name="Boissy R."/>
            <person name="Hayes J."/>
            <person name="Keefe R."/>
            <person name="Post J.C."/>
            <person name="Ehrlich G.D."/>
        </authorList>
    </citation>
    <scope>NUCLEOTIDE SEQUENCE [LARGE SCALE GENOMIC DNA]</scope>
    <source>
        <strain>PittEE</strain>
    </source>
</reference>
<proteinExistence type="inferred from homology"/>
<accession>A5UCR5</accession>
<keyword id="KW-0963">Cytoplasm</keyword>
<keyword id="KW-0489">Methyltransferase</keyword>
<keyword id="KW-0698">rRNA processing</keyword>
<keyword id="KW-0949">S-adenosyl-L-methionine</keyword>
<keyword id="KW-0808">Transferase</keyword>
<name>RLMM_HAEIE</name>